<feature type="chain" id="PRO_0000273730" description="Proline/serine-rich coiled-coil protein 1">
    <location>
        <begin position="1"/>
        <end position="329"/>
    </location>
</feature>
<feature type="repeat" description="1">
    <location>
        <begin position="38"/>
        <end position="41"/>
    </location>
</feature>
<feature type="repeat" description="2">
    <location>
        <begin position="68"/>
        <end position="71"/>
    </location>
</feature>
<feature type="repeat" description="3">
    <location>
        <begin position="103"/>
        <end position="106"/>
    </location>
</feature>
<feature type="repeat" description="4">
    <location>
        <begin position="194"/>
        <end position="197"/>
    </location>
</feature>
<feature type="repeat" description="5">
    <location>
        <begin position="212"/>
        <end position="215"/>
    </location>
</feature>
<feature type="region of interest" description="5 X 4 AA repeats of P-X-X-P">
    <location>
        <begin position="68"/>
        <end position="215"/>
    </location>
</feature>
<feature type="region of interest" description="Disordered" evidence="5">
    <location>
        <begin position="94"/>
        <end position="329"/>
    </location>
</feature>
<feature type="coiled-coil region" evidence="4">
    <location>
        <begin position="70"/>
        <end position="94"/>
    </location>
</feature>
<feature type="compositionally biased region" description="Basic and acidic residues" evidence="5">
    <location>
        <begin position="114"/>
        <end position="126"/>
    </location>
</feature>
<feature type="compositionally biased region" description="Polar residues" evidence="5">
    <location>
        <begin position="132"/>
        <end position="148"/>
    </location>
</feature>
<feature type="compositionally biased region" description="Polar residues" evidence="5">
    <location>
        <begin position="175"/>
        <end position="186"/>
    </location>
</feature>
<feature type="compositionally biased region" description="Low complexity" evidence="5">
    <location>
        <begin position="219"/>
        <end position="231"/>
    </location>
</feature>
<feature type="compositionally biased region" description="Low complexity" evidence="5">
    <location>
        <begin position="302"/>
        <end position="315"/>
    </location>
</feature>
<feature type="modified residue" description="Phosphoserine" evidence="2">
    <location>
        <position position="22"/>
    </location>
</feature>
<feature type="modified residue" description="Phosphoserine" evidence="2">
    <location>
        <position position="47"/>
    </location>
</feature>
<feature type="modified residue" description="Phosphoserine" evidence="2">
    <location>
        <position position="65"/>
    </location>
</feature>
<feature type="modified residue" description="Phosphoserine" evidence="2">
    <location>
        <position position="70"/>
    </location>
</feature>
<feature type="modified residue" description="Phosphoserine" evidence="2">
    <location>
        <position position="124"/>
    </location>
</feature>
<feature type="modified residue" description="Phosphothreonine" evidence="2">
    <location>
        <position position="145"/>
    </location>
</feature>
<feature type="modified residue" description="Phosphoserine" evidence="2">
    <location>
        <position position="189"/>
    </location>
</feature>
<accession>Q3KR66</accession>
<organism>
    <name type="scientific">Rattus norvegicus</name>
    <name type="common">Rat</name>
    <dbReference type="NCBI Taxonomy" id="10116"/>
    <lineage>
        <taxon>Eukaryota</taxon>
        <taxon>Metazoa</taxon>
        <taxon>Chordata</taxon>
        <taxon>Craniata</taxon>
        <taxon>Vertebrata</taxon>
        <taxon>Euteleostomi</taxon>
        <taxon>Mammalia</taxon>
        <taxon>Eutheria</taxon>
        <taxon>Euarchontoglires</taxon>
        <taxon>Glires</taxon>
        <taxon>Rodentia</taxon>
        <taxon>Myomorpha</taxon>
        <taxon>Muroidea</taxon>
        <taxon>Muridae</taxon>
        <taxon>Murinae</taxon>
        <taxon>Rattus</taxon>
    </lineage>
</organism>
<proteinExistence type="evidence at transcript level"/>
<gene>
    <name type="primary">Psrc1</name>
    <name type="synonym">Dda3</name>
</gene>
<keyword id="KW-0131">Cell cycle</keyword>
<keyword id="KW-0132">Cell division</keyword>
<keyword id="KW-0175">Coiled coil</keyword>
<keyword id="KW-0963">Cytoplasm</keyword>
<keyword id="KW-0206">Cytoskeleton</keyword>
<keyword id="KW-0498">Mitosis</keyword>
<keyword id="KW-0597">Phosphoprotein</keyword>
<keyword id="KW-1185">Reference proteome</keyword>
<keyword id="KW-0677">Repeat</keyword>
<protein>
    <recommendedName>
        <fullName>Proline/serine-rich coiled-coil protein 1</fullName>
    </recommendedName>
</protein>
<dbReference type="EMBL" id="BC105874">
    <property type="protein sequence ID" value="AAI05875.1"/>
    <property type="molecule type" value="mRNA"/>
</dbReference>
<dbReference type="RefSeq" id="NP_001037767.1">
    <property type="nucleotide sequence ID" value="NM_001044302.1"/>
</dbReference>
<dbReference type="RefSeq" id="XP_006233238.1">
    <property type="nucleotide sequence ID" value="XM_006233176.5"/>
</dbReference>
<dbReference type="RefSeq" id="XP_006233239.1">
    <property type="nucleotide sequence ID" value="XM_006233177.2"/>
</dbReference>
<dbReference type="RefSeq" id="XP_006233240.1">
    <property type="nucleotide sequence ID" value="XM_006233178.3"/>
</dbReference>
<dbReference type="RefSeq" id="XP_006233241.1">
    <property type="nucleotide sequence ID" value="XM_006233179.4"/>
</dbReference>
<dbReference type="RefSeq" id="XP_063138662.1">
    <property type="nucleotide sequence ID" value="XM_063282592.1"/>
</dbReference>
<dbReference type="SMR" id="Q3KR66"/>
<dbReference type="FunCoup" id="Q3KR66">
    <property type="interactions" value="515"/>
</dbReference>
<dbReference type="STRING" id="10116.ENSRNOP00000052733"/>
<dbReference type="GlyGen" id="Q3KR66">
    <property type="glycosylation" value="1 site"/>
</dbReference>
<dbReference type="PhosphoSitePlus" id="Q3KR66"/>
<dbReference type="PaxDb" id="10116-ENSRNOP00000052733"/>
<dbReference type="Ensembl" id="ENSRNOT00000055880.3">
    <property type="protein sequence ID" value="ENSRNOP00000052733.1"/>
    <property type="gene ID" value="ENSRNOG00000020013.8"/>
</dbReference>
<dbReference type="GeneID" id="691380"/>
<dbReference type="KEGG" id="rno:691380"/>
<dbReference type="UCSC" id="RGD:1585037">
    <property type="organism name" value="rat"/>
</dbReference>
<dbReference type="AGR" id="RGD:1585037"/>
<dbReference type="CTD" id="84722"/>
<dbReference type="RGD" id="1585037">
    <property type="gene designation" value="Psrc1"/>
</dbReference>
<dbReference type="eggNOG" id="ENOG502S467">
    <property type="taxonomic scope" value="Eukaryota"/>
</dbReference>
<dbReference type="GeneTree" id="ENSGT00940000154189"/>
<dbReference type="HOGENOM" id="CLU_067830_0_0_1"/>
<dbReference type="InParanoid" id="Q3KR66"/>
<dbReference type="OMA" id="FIVDETF"/>
<dbReference type="PhylomeDB" id="Q3KR66"/>
<dbReference type="TreeFam" id="TF338374"/>
<dbReference type="PRO" id="PR:Q3KR66"/>
<dbReference type="Proteomes" id="UP000002494">
    <property type="component" value="Chromosome 2"/>
</dbReference>
<dbReference type="Bgee" id="ENSRNOG00000020013">
    <property type="expression patterns" value="Expressed in ovary and 18 other cell types or tissues"/>
</dbReference>
<dbReference type="GO" id="GO:0005737">
    <property type="term" value="C:cytoplasm"/>
    <property type="evidence" value="ECO:0000266"/>
    <property type="project" value="RGD"/>
</dbReference>
<dbReference type="GO" id="GO:0005829">
    <property type="term" value="C:cytosol"/>
    <property type="evidence" value="ECO:0000250"/>
    <property type="project" value="UniProtKB"/>
</dbReference>
<dbReference type="GO" id="GO:0015630">
    <property type="term" value="C:microtubule cytoskeleton"/>
    <property type="evidence" value="ECO:0000266"/>
    <property type="project" value="RGD"/>
</dbReference>
<dbReference type="GO" id="GO:0030496">
    <property type="term" value="C:midbody"/>
    <property type="evidence" value="ECO:0000266"/>
    <property type="project" value="RGD"/>
</dbReference>
<dbReference type="GO" id="GO:0005819">
    <property type="term" value="C:spindle"/>
    <property type="evidence" value="ECO:0000266"/>
    <property type="project" value="RGD"/>
</dbReference>
<dbReference type="GO" id="GO:0005876">
    <property type="term" value="C:spindle microtubule"/>
    <property type="evidence" value="ECO:0000266"/>
    <property type="project" value="RGD"/>
</dbReference>
<dbReference type="GO" id="GO:0000922">
    <property type="term" value="C:spindle pole"/>
    <property type="evidence" value="ECO:0000266"/>
    <property type="project" value="RGD"/>
</dbReference>
<dbReference type="GO" id="GO:0008017">
    <property type="term" value="F:microtubule binding"/>
    <property type="evidence" value="ECO:0000266"/>
    <property type="project" value="RGD"/>
</dbReference>
<dbReference type="GO" id="GO:0051301">
    <property type="term" value="P:cell division"/>
    <property type="evidence" value="ECO:0007669"/>
    <property type="project" value="UniProtKB-KW"/>
</dbReference>
<dbReference type="GO" id="GO:0001578">
    <property type="term" value="P:microtubule bundle formation"/>
    <property type="evidence" value="ECO:0000266"/>
    <property type="project" value="RGD"/>
</dbReference>
<dbReference type="GO" id="GO:0007080">
    <property type="term" value="P:mitotic metaphase chromosome alignment"/>
    <property type="evidence" value="ECO:0000250"/>
    <property type="project" value="UniProtKB"/>
</dbReference>
<dbReference type="GO" id="GO:0030308">
    <property type="term" value="P:negative regulation of cell growth"/>
    <property type="evidence" value="ECO:0000266"/>
    <property type="project" value="RGD"/>
</dbReference>
<dbReference type="GO" id="GO:0045893">
    <property type="term" value="P:positive regulation of DNA-templated transcription"/>
    <property type="evidence" value="ECO:0000266"/>
    <property type="project" value="RGD"/>
</dbReference>
<dbReference type="GO" id="GO:0031116">
    <property type="term" value="P:positive regulation of microtubule polymerization"/>
    <property type="evidence" value="ECO:0000266"/>
    <property type="project" value="RGD"/>
</dbReference>
<dbReference type="GO" id="GO:0060236">
    <property type="term" value="P:regulation of mitotic spindle organization"/>
    <property type="evidence" value="ECO:0000250"/>
    <property type="project" value="UniProtKB"/>
</dbReference>
<dbReference type="InterPro" id="IPR026657">
    <property type="entry name" value="DDA3/GTSE-1"/>
</dbReference>
<dbReference type="InterPro" id="IPR032768">
    <property type="entry name" value="GTSE1_N"/>
</dbReference>
<dbReference type="PANTHER" id="PTHR21584">
    <property type="entry name" value="DIFFERENTIAL DISPLAY AND ACTIVATED BY P53 DDA3 /G2 S PHASE EXPRESSED 1"/>
    <property type="match status" value="1"/>
</dbReference>
<dbReference type="PANTHER" id="PTHR21584:SF1">
    <property type="entry name" value="PROLINE_SERINE-RICH COILED-COIL PROTEIN 1"/>
    <property type="match status" value="1"/>
</dbReference>
<dbReference type="Pfam" id="PF15259">
    <property type="entry name" value="GTSE1_N"/>
    <property type="match status" value="1"/>
</dbReference>
<comment type="function">
    <text evidence="2">Required for normal progression through mitosis. Required for normal congress of chromosomes at the metaphase plate, and for normal rate of chromosomal segregation during anaphase. Plays a role in the regulation of mitotic spindle dynamics. Increases the rate of turnover of microtubules on metaphase spindles, and contributes to the generation of normal tension across sister kinetochores. Recruits KIF2A and ANKRD53 to the mitotic spindle and spindle poles. May participate in p53/TP53-regulated growth suppression (By similarity).</text>
</comment>
<comment type="subunit">
    <text evidence="2 3">Interacts with APC2 (By similarity). Interacts with KIF2A (By similarity). Interacts with ANKRD53; recruits ANKRD53 to the spindle during mitosis (By similarity).</text>
</comment>
<comment type="subcellular location">
    <subcellularLocation>
        <location evidence="1">Cytoplasm</location>
    </subcellularLocation>
    <subcellularLocation>
        <location>Cytoplasm</location>
        <location>Cytoskeleton</location>
        <location>Spindle</location>
    </subcellularLocation>
    <subcellularLocation>
        <location evidence="1">Cytoplasm</location>
        <location evidence="1">Cytoskeleton</location>
        <location evidence="1">Spindle pole</location>
    </subcellularLocation>
    <text evidence="1">Detected at the mitotic spindle and spindle poles. Diffusely distributed throughout the cell during interphase (By similarity).</text>
</comment>
<comment type="PTM">
    <text evidence="1">Phosphorylated during mitosis.</text>
</comment>
<comment type="similarity">
    <text evidence="6">Belongs to the PSRC1 family.</text>
</comment>
<reference key="1">
    <citation type="journal article" date="2004" name="Genome Res.">
        <title>The status, quality, and expansion of the NIH full-length cDNA project: the Mammalian Gene Collection (MGC).</title>
        <authorList>
            <consortium name="The MGC Project Team"/>
        </authorList>
    </citation>
    <scope>NUCLEOTIDE SEQUENCE [LARGE SCALE MRNA]</scope>
    <source>
        <tissue>Testis</tissue>
    </source>
</reference>
<name>PSRC1_RAT</name>
<sequence>MEDLKEDIKFIVDETLDFGGLSPSDSHEEEDITVLVSPEKPLRRGLSHRSNPNAVAPALQGVRFSLGPLSPEKLEEILDEANRLAAQLEECALKDSENAAAGPGRPSPRGKPSPRRETFVLKDSPVRDLLPTVSSWSAPPPSNLTGLRSSDKKGSARAGRVTAGKKPSSIKKESPTCNLFSASKNPGRSPLAQPTLPPRRKTGSGARTVASPPIPVRPAPQSSASNSQCSSWLQGAAAKSSSRLPFPSAIPKPAIRMPLTGRSIPAGKGALAPDPLPTQKGHPSTVGHRAPVSQRTNLPTIGAARGRTSSAARGRVQPLRKAAVPGPTR</sequence>
<evidence type="ECO:0000250" key="1"/>
<evidence type="ECO:0000250" key="2">
    <source>
        <dbReference type="UniProtKB" id="Q6PGN9"/>
    </source>
</evidence>
<evidence type="ECO:0000250" key="3">
    <source>
        <dbReference type="UniProtKB" id="Q9D0P7"/>
    </source>
</evidence>
<evidence type="ECO:0000255" key="4"/>
<evidence type="ECO:0000256" key="5">
    <source>
        <dbReference type="SAM" id="MobiDB-lite"/>
    </source>
</evidence>
<evidence type="ECO:0000305" key="6"/>